<accession>C4LL70</accession>
<reference key="1">
    <citation type="journal article" date="2008" name="J. Biotechnol.">
        <title>Ultrafast pyrosequencing of Corynebacterium kroppenstedtii DSM44385 revealed insights into the physiology of a lipophilic corynebacterium that lacks mycolic acids.</title>
        <authorList>
            <person name="Tauch A."/>
            <person name="Schneider J."/>
            <person name="Szczepanowski R."/>
            <person name="Tilker A."/>
            <person name="Viehoever P."/>
            <person name="Gartemann K.-H."/>
            <person name="Arnold W."/>
            <person name="Blom J."/>
            <person name="Brinkrolf K."/>
            <person name="Brune I."/>
            <person name="Goetker S."/>
            <person name="Weisshaar B."/>
            <person name="Goesmann A."/>
            <person name="Droege M."/>
            <person name="Puehler A."/>
        </authorList>
    </citation>
    <scope>NUCLEOTIDE SEQUENCE [LARGE SCALE GENOMIC DNA]</scope>
    <source>
        <strain>DSM 44385 / JCM 11950 / CIP 105744 / CCUG 35717</strain>
    </source>
</reference>
<dbReference type="EC" id="2.7.7.6" evidence="1"/>
<dbReference type="EMBL" id="CP001620">
    <property type="protein sequence ID" value="ACR18575.1"/>
    <property type="molecule type" value="Genomic_DNA"/>
</dbReference>
<dbReference type="RefSeq" id="WP_012732462.1">
    <property type="nucleotide sequence ID" value="NC_012704.1"/>
</dbReference>
<dbReference type="SMR" id="C4LL70"/>
<dbReference type="STRING" id="645127.ckrop_1857"/>
<dbReference type="KEGG" id="ckp:ckrop_1857"/>
<dbReference type="eggNOG" id="COG0086">
    <property type="taxonomic scope" value="Bacteria"/>
</dbReference>
<dbReference type="HOGENOM" id="CLU_000524_3_1_11"/>
<dbReference type="OrthoDB" id="9815296at2"/>
<dbReference type="Proteomes" id="UP000001473">
    <property type="component" value="Chromosome"/>
</dbReference>
<dbReference type="GO" id="GO:0000428">
    <property type="term" value="C:DNA-directed RNA polymerase complex"/>
    <property type="evidence" value="ECO:0007669"/>
    <property type="project" value="UniProtKB-KW"/>
</dbReference>
<dbReference type="GO" id="GO:0003677">
    <property type="term" value="F:DNA binding"/>
    <property type="evidence" value="ECO:0007669"/>
    <property type="project" value="UniProtKB-UniRule"/>
</dbReference>
<dbReference type="GO" id="GO:0003899">
    <property type="term" value="F:DNA-directed RNA polymerase activity"/>
    <property type="evidence" value="ECO:0007669"/>
    <property type="project" value="UniProtKB-UniRule"/>
</dbReference>
<dbReference type="GO" id="GO:0000287">
    <property type="term" value="F:magnesium ion binding"/>
    <property type="evidence" value="ECO:0007669"/>
    <property type="project" value="UniProtKB-UniRule"/>
</dbReference>
<dbReference type="GO" id="GO:0008270">
    <property type="term" value="F:zinc ion binding"/>
    <property type="evidence" value="ECO:0007669"/>
    <property type="project" value="UniProtKB-UniRule"/>
</dbReference>
<dbReference type="GO" id="GO:0006351">
    <property type="term" value="P:DNA-templated transcription"/>
    <property type="evidence" value="ECO:0007669"/>
    <property type="project" value="UniProtKB-UniRule"/>
</dbReference>
<dbReference type="CDD" id="cd02655">
    <property type="entry name" value="RNAP_beta'_C"/>
    <property type="match status" value="1"/>
</dbReference>
<dbReference type="CDD" id="cd01609">
    <property type="entry name" value="RNAP_beta'_N"/>
    <property type="match status" value="1"/>
</dbReference>
<dbReference type="FunFam" id="1.10.150.390:FF:000002">
    <property type="entry name" value="DNA-directed RNA polymerase subunit beta"/>
    <property type="match status" value="1"/>
</dbReference>
<dbReference type="FunFam" id="1.10.40.90:FF:000001">
    <property type="entry name" value="DNA-directed RNA polymerase subunit beta"/>
    <property type="match status" value="1"/>
</dbReference>
<dbReference type="FunFam" id="4.10.860.120:FF:000001">
    <property type="entry name" value="DNA-directed RNA polymerase subunit beta"/>
    <property type="match status" value="1"/>
</dbReference>
<dbReference type="Gene3D" id="1.10.132.30">
    <property type="match status" value="1"/>
</dbReference>
<dbReference type="Gene3D" id="1.10.150.390">
    <property type="match status" value="1"/>
</dbReference>
<dbReference type="Gene3D" id="1.10.1790.20">
    <property type="match status" value="1"/>
</dbReference>
<dbReference type="Gene3D" id="1.10.40.90">
    <property type="match status" value="1"/>
</dbReference>
<dbReference type="Gene3D" id="2.40.40.20">
    <property type="match status" value="1"/>
</dbReference>
<dbReference type="Gene3D" id="2.40.50.100">
    <property type="match status" value="1"/>
</dbReference>
<dbReference type="Gene3D" id="4.10.860.120">
    <property type="entry name" value="RNA polymerase II, clamp domain"/>
    <property type="match status" value="1"/>
</dbReference>
<dbReference type="Gene3D" id="1.10.274.100">
    <property type="entry name" value="RNA polymerase Rpb1, domain 3"/>
    <property type="match status" value="1"/>
</dbReference>
<dbReference type="HAMAP" id="MF_01322">
    <property type="entry name" value="RNApol_bact_RpoC"/>
    <property type="match status" value="1"/>
</dbReference>
<dbReference type="InterPro" id="IPR045867">
    <property type="entry name" value="DNA-dir_RpoC_beta_prime"/>
</dbReference>
<dbReference type="InterPro" id="IPR012754">
    <property type="entry name" value="DNA-dir_RpoC_beta_prime_bact"/>
</dbReference>
<dbReference type="InterPro" id="IPR000722">
    <property type="entry name" value="RNA_pol_asu"/>
</dbReference>
<dbReference type="InterPro" id="IPR006592">
    <property type="entry name" value="RNA_pol_N"/>
</dbReference>
<dbReference type="InterPro" id="IPR007080">
    <property type="entry name" value="RNA_pol_Rpb1_1"/>
</dbReference>
<dbReference type="InterPro" id="IPR007066">
    <property type="entry name" value="RNA_pol_Rpb1_3"/>
</dbReference>
<dbReference type="InterPro" id="IPR042102">
    <property type="entry name" value="RNA_pol_Rpb1_3_sf"/>
</dbReference>
<dbReference type="InterPro" id="IPR007083">
    <property type="entry name" value="RNA_pol_Rpb1_4"/>
</dbReference>
<dbReference type="InterPro" id="IPR007081">
    <property type="entry name" value="RNA_pol_Rpb1_5"/>
</dbReference>
<dbReference type="InterPro" id="IPR044893">
    <property type="entry name" value="RNA_pol_Rpb1_clamp_domain"/>
</dbReference>
<dbReference type="InterPro" id="IPR038120">
    <property type="entry name" value="Rpb1_funnel_sf"/>
</dbReference>
<dbReference type="NCBIfam" id="NF011498">
    <property type="entry name" value="PRK14906.1"/>
    <property type="match status" value="1"/>
</dbReference>
<dbReference type="NCBIfam" id="TIGR02386">
    <property type="entry name" value="rpoC_TIGR"/>
    <property type="match status" value="1"/>
</dbReference>
<dbReference type="PANTHER" id="PTHR19376">
    <property type="entry name" value="DNA-DIRECTED RNA POLYMERASE"/>
    <property type="match status" value="1"/>
</dbReference>
<dbReference type="PANTHER" id="PTHR19376:SF54">
    <property type="entry name" value="DNA-DIRECTED RNA POLYMERASE SUBUNIT BETA"/>
    <property type="match status" value="1"/>
</dbReference>
<dbReference type="Pfam" id="PF04997">
    <property type="entry name" value="RNA_pol_Rpb1_1"/>
    <property type="match status" value="1"/>
</dbReference>
<dbReference type="Pfam" id="PF00623">
    <property type="entry name" value="RNA_pol_Rpb1_2"/>
    <property type="match status" value="2"/>
</dbReference>
<dbReference type="Pfam" id="PF04983">
    <property type="entry name" value="RNA_pol_Rpb1_3"/>
    <property type="match status" value="1"/>
</dbReference>
<dbReference type="Pfam" id="PF05000">
    <property type="entry name" value="RNA_pol_Rpb1_4"/>
    <property type="match status" value="1"/>
</dbReference>
<dbReference type="Pfam" id="PF04998">
    <property type="entry name" value="RNA_pol_Rpb1_5"/>
    <property type="match status" value="1"/>
</dbReference>
<dbReference type="SMART" id="SM00663">
    <property type="entry name" value="RPOLA_N"/>
    <property type="match status" value="1"/>
</dbReference>
<dbReference type="SUPFAM" id="SSF64484">
    <property type="entry name" value="beta and beta-prime subunits of DNA dependent RNA-polymerase"/>
    <property type="match status" value="1"/>
</dbReference>
<keyword id="KW-0240">DNA-directed RNA polymerase</keyword>
<keyword id="KW-0460">Magnesium</keyword>
<keyword id="KW-0479">Metal-binding</keyword>
<keyword id="KW-0548">Nucleotidyltransferase</keyword>
<keyword id="KW-1185">Reference proteome</keyword>
<keyword id="KW-0804">Transcription</keyword>
<keyword id="KW-0808">Transferase</keyword>
<keyword id="KW-0862">Zinc</keyword>
<gene>
    <name evidence="1" type="primary">rpoC</name>
    <name type="ordered locus">ckrop_1857</name>
</gene>
<protein>
    <recommendedName>
        <fullName evidence="1">DNA-directed RNA polymerase subunit beta'</fullName>
        <shortName evidence="1">RNAP subunit beta'</shortName>
        <ecNumber evidence="1">2.7.7.6</ecNumber>
    </recommendedName>
    <alternativeName>
        <fullName evidence="1">RNA polymerase subunit beta'</fullName>
    </alternativeName>
    <alternativeName>
        <fullName evidence="1">Transcriptase subunit beta'</fullName>
    </alternativeName>
</protein>
<proteinExistence type="inferred from homology"/>
<feature type="chain" id="PRO_1000214493" description="DNA-directed RNA polymerase subunit beta'">
    <location>
        <begin position="1"/>
        <end position="1332"/>
    </location>
</feature>
<feature type="binding site" evidence="1">
    <location>
        <position position="60"/>
    </location>
    <ligand>
        <name>Zn(2+)</name>
        <dbReference type="ChEBI" id="CHEBI:29105"/>
        <label>1</label>
    </ligand>
</feature>
<feature type="binding site" evidence="1">
    <location>
        <position position="62"/>
    </location>
    <ligand>
        <name>Zn(2+)</name>
        <dbReference type="ChEBI" id="CHEBI:29105"/>
        <label>1</label>
    </ligand>
</feature>
<feature type="binding site" evidence="1">
    <location>
        <position position="75"/>
    </location>
    <ligand>
        <name>Zn(2+)</name>
        <dbReference type="ChEBI" id="CHEBI:29105"/>
        <label>1</label>
    </ligand>
</feature>
<feature type="binding site" evidence="1">
    <location>
        <position position="78"/>
    </location>
    <ligand>
        <name>Zn(2+)</name>
        <dbReference type="ChEBI" id="CHEBI:29105"/>
        <label>1</label>
    </ligand>
</feature>
<feature type="binding site" evidence="1">
    <location>
        <position position="535"/>
    </location>
    <ligand>
        <name>Mg(2+)</name>
        <dbReference type="ChEBI" id="CHEBI:18420"/>
    </ligand>
</feature>
<feature type="binding site" evidence="1">
    <location>
        <position position="537"/>
    </location>
    <ligand>
        <name>Mg(2+)</name>
        <dbReference type="ChEBI" id="CHEBI:18420"/>
    </ligand>
</feature>
<feature type="binding site" evidence="1">
    <location>
        <position position="539"/>
    </location>
    <ligand>
        <name>Mg(2+)</name>
        <dbReference type="ChEBI" id="CHEBI:18420"/>
    </ligand>
</feature>
<feature type="binding site" evidence="1">
    <location>
        <position position="894"/>
    </location>
    <ligand>
        <name>Zn(2+)</name>
        <dbReference type="ChEBI" id="CHEBI:29105"/>
        <label>2</label>
    </ligand>
</feature>
<feature type="binding site" evidence="1">
    <location>
        <position position="977"/>
    </location>
    <ligand>
        <name>Zn(2+)</name>
        <dbReference type="ChEBI" id="CHEBI:29105"/>
        <label>2</label>
    </ligand>
</feature>
<feature type="binding site" evidence="1">
    <location>
        <position position="984"/>
    </location>
    <ligand>
        <name>Zn(2+)</name>
        <dbReference type="ChEBI" id="CHEBI:29105"/>
        <label>2</label>
    </ligand>
</feature>
<feature type="binding site" evidence="1">
    <location>
        <position position="987"/>
    </location>
    <ligand>
        <name>Zn(2+)</name>
        <dbReference type="ChEBI" id="CHEBI:29105"/>
        <label>2</label>
    </ligand>
</feature>
<sequence>MLDVNLFDELRIGLATADDIRRWSHGEVKKPETINYRTLKPEKDGLFCERIFGPTRDWECACGKYKRVRYKGIVCERCGVEVTKSKVRRERMGHIELAAPVTHIWYFKGVPSRLGYLLDLAPKDLEKIIYFAANIITSVDEEARHTDQETLEADIFMEKKEVEADRDEELAERQQKLEEDLKELESNGAKADAKRKVQNAAEREMRHIRERAEREIDRLDEIWNTFIKLAPKQMIVDETIYSELVDRYEDYFTGGMGAEAIQTLIKNFDLEAEAEKLSEVIRDGKGQKQVRALKRLRVVAAFLRSGNDPAAMVLDAIPVIPPELRPMVQLDGGRFATSDLNDLYRRVINRNNRLKRMIDLGAPEIIVNNEKRMLQESVDALFDNGRRGRPVTGPGNRPLKSLSDLLKGKQGRFRQNLLGKRVDYSGRSVIIVGPQLKLHQCGLPKLMALELFKPFVMKRLVEKSYAQNIRSAKRMVERQRPEVWDVLEEAIAEHPVMLNRAPTLHRLGIQAFEPVLVEGKAIQLHPLACEAFNADFDGDQMAVHLPLSAEAQAEARVLMLASNNILSPASGKPLAMPRLDMVTGLYFLTLEKSEDQLGGEGAYHEADENGPKRGTYSSFAEALMARDRGVLGLQAPIEVRISHLRPPEDIEAELFPDGWQRGQKWTAHTTLGRIMFNELLPWNYPFVNGVMAKKAQAVIINDLAARYPMITVAQTVDKMKDAGFYWATRSCVTISMDDVLVLPNKEEILQRYEKQAATIEKKLARGKINNEERYRSLVDLWKECTDFVGESVEKIYPDDNPIPMIVKSGAAGNMRQIWTLAGMKGMVTNSRGDYITRPIKTSFREGLSVLEYFNNSHGSRKGLADTALRTADSGYLTRRLVDVAQDVIVREDDCGTRKGLEVDVAKPVLDAEGNETGEFTRAEFLETALIGRYLAKDAVNDNGDVIYERGAFVGDAEAKKMVAEGVRTATVRTVMMCETATGVCATCYGRSMATGQKVDIGEAVGIVAAQSIGEPGTQLTMRTFHQGGVGGDITGGLPRVQELFEARVPKNQAPIASTEGTIKLEDDGNFYTLTITPDNGEDEVVYEKLSKRQGLAVTQEPGGFEHQLRTGDHVVTGQPLLRGAPDPHEVLRVEGVTGVQKHLIEQVQKVYRDQGVAIHDKHIEIIVRQMLRRLTVVDSGSTELLPGSLIDRNEARAINKAVATNGGEGAAFRQEIMGITKASLATESWLSAASFQETTRVLTDAAINKRSDKLIGLKENVIIGKLIPAGTGISRYRNISVEPTEEARAQAFSMNTSYGDGFYGEDGAYGEFTGAAVRLDDQGFDGGFGDIS</sequence>
<organism>
    <name type="scientific">Corynebacterium kroppenstedtii (strain DSM 44385 / JCM 11950 / CIP 105744 / CCUG 35717)</name>
    <dbReference type="NCBI Taxonomy" id="645127"/>
    <lineage>
        <taxon>Bacteria</taxon>
        <taxon>Bacillati</taxon>
        <taxon>Actinomycetota</taxon>
        <taxon>Actinomycetes</taxon>
        <taxon>Mycobacteriales</taxon>
        <taxon>Corynebacteriaceae</taxon>
        <taxon>Corynebacterium</taxon>
    </lineage>
</organism>
<name>RPOC_CORK4</name>
<comment type="function">
    <text evidence="1">DNA-dependent RNA polymerase catalyzes the transcription of DNA into RNA using the four ribonucleoside triphosphates as substrates.</text>
</comment>
<comment type="catalytic activity">
    <reaction evidence="1">
        <text>RNA(n) + a ribonucleoside 5'-triphosphate = RNA(n+1) + diphosphate</text>
        <dbReference type="Rhea" id="RHEA:21248"/>
        <dbReference type="Rhea" id="RHEA-COMP:14527"/>
        <dbReference type="Rhea" id="RHEA-COMP:17342"/>
        <dbReference type="ChEBI" id="CHEBI:33019"/>
        <dbReference type="ChEBI" id="CHEBI:61557"/>
        <dbReference type="ChEBI" id="CHEBI:140395"/>
        <dbReference type="EC" id="2.7.7.6"/>
    </reaction>
</comment>
<comment type="cofactor">
    <cofactor evidence="1">
        <name>Mg(2+)</name>
        <dbReference type="ChEBI" id="CHEBI:18420"/>
    </cofactor>
    <text evidence="1">Binds 1 Mg(2+) ion per subunit.</text>
</comment>
<comment type="cofactor">
    <cofactor evidence="1">
        <name>Zn(2+)</name>
        <dbReference type="ChEBI" id="CHEBI:29105"/>
    </cofactor>
    <text evidence="1">Binds 2 Zn(2+) ions per subunit.</text>
</comment>
<comment type="subunit">
    <text evidence="1">The RNAP catalytic core consists of 2 alpha, 1 beta, 1 beta' and 1 omega subunit. When a sigma factor is associated with the core the holoenzyme is formed, which can initiate transcription.</text>
</comment>
<comment type="similarity">
    <text evidence="1">Belongs to the RNA polymerase beta' chain family.</text>
</comment>
<evidence type="ECO:0000255" key="1">
    <source>
        <dbReference type="HAMAP-Rule" id="MF_01322"/>
    </source>
</evidence>